<proteinExistence type="evidence at protein level"/>
<sequence length="211" mass="23904">MRTGPLFDPSFRDGLDALFQWRRDVRHFRKDPIDEETVARLLACADLAPSVGNSQPWRFVRVDDGARRGVIIDDFTRCNAAARALQPEERQDAYARLKLEGLREAPLQLAVFCDEATDQGHGLGQATMPETRRYSVVMAIHTLWLAARARGLGVGWVSVLDPQTVTAALDVPAEWAFVAYLCIGWPREEHPIPELERLGWQSRRPHPVVRR</sequence>
<feature type="chain" id="PRO_0000424084" description="5,6-dimethylbenzimidazole synthase">
    <location>
        <begin position="1"/>
        <end position="211"/>
    </location>
</feature>
<feature type="binding site" evidence="1">
    <location>
        <begin position="22"/>
        <end position="26"/>
    </location>
    <ligand>
        <name>FMN</name>
        <dbReference type="ChEBI" id="CHEBI:58210"/>
    </ligand>
</feature>
<feature type="binding site" evidence="1">
    <location>
        <position position="50"/>
    </location>
    <ligand>
        <name>FMN</name>
        <dbReference type="ChEBI" id="CHEBI:58210"/>
    </ligand>
</feature>
<feature type="binding site" evidence="1">
    <location>
        <position position="99"/>
    </location>
    <ligand>
        <name>FMN</name>
        <dbReference type="ChEBI" id="CHEBI:58210"/>
    </ligand>
</feature>
<feature type="binding site" evidence="1">
    <location>
        <position position="158"/>
    </location>
    <ligand>
        <name>FMN</name>
        <dbReference type="ChEBI" id="CHEBI:58210"/>
    </ligand>
</feature>
<feature type="mutagenesis site" description="Completely abolishes DMB formation." evidence="2">
    <original>R</original>
    <variation>E</variation>
    <location>
        <position position="22"/>
    </location>
</feature>
<name>BLUB_RHORT</name>
<gene>
    <name type="ordered locus">Rru_A3536</name>
</gene>
<evidence type="ECO:0000250" key="1"/>
<evidence type="ECO:0000269" key="2">
    <source>
    </source>
</evidence>
<evidence type="ECO:0000305" key="3"/>
<dbReference type="EC" id="1.13.11.79"/>
<dbReference type="EMBL" id="CP000230">
    <property type="protein sequence ID" value="ABC24330.1"/>
    <property type="molecule type" value="Genomic_DNA"/>
</dbReference>
<dbReference type="RefSeq" id="YP_428617.1">
    <property type="nucleotide sequence ID" value="NC_007643.1"/>
</dbReference>
<dbReference type="SMR" id="Q2RNG5"/>
<dbReference type="STRING" id="269796.Rru_A3536"/>
<dbReference type="EnsemblBacteria" id="ABC24330">
    <property type="protein sequence ID" value="ABC24330"/>
    <property type="gene ID" value="Rru_A3536"/>
</dbReference>
<dbReference type="KEGG" id="rru:Rru_A3536"/>
<dbReference type="PATRIC" id="fig|269796.9.peg.3653"/>
<dbReference type="eggNOG" id="COG0778">
    <property type="taxonomic scope" value="Bacteria"/>
</dbReference>
<dbReference type="HOGENOM" id="CLU_070764_3_0_5"/>
<dbReference type="PhylomeDB" id="Q2RNG5"/>
<dbReference type="BRENDA" id="1.13.11.79">
    <property type="organism ID" value="5420"/>
</dbReference>
<dbReference type="Proteomes" id="UP000001929">
    <property type="component" value="Chromosome"/>
</dbReference>
<dbReference type="GO" id="GO:0102919">
    <property type="term" value="F:5,6-dimethylbenzimidazole synthase activity"/>
    <property type="evidence" value="ECO:0007669"/>
    <property type="project" value="UniProtKB-EC"/>
</dbReference>
<dbReference type="GO" id="GO:0000166">
    <property type="term" value="F:nucleotide binding"/>
    <property type="evidence" value="ECO:0007669"/>
    <property type="project" value="UniProtKB-KW"/>
</dbReference>
<dbReference type="GO" id="GO:0016705">
    <property type="term" value="F:oxidoreductase activity, acting on paired donors, with incorporation or reduction of molecular oxygen"/>
    <property type="evidence" value="ECO:0000314"/>
    <property type="project" value="UniProtKB"/>
</dbReference>
<dbReference type="GO" id="GO:0009236">
    <property type="term" value="P:cobalamin biosynthetic process"/>
    <property type="evidence" value="ECO:0000314"/>
    <property type="project" value="UniProtKB"/>
</dbReference>
<dbReference type="CDD" id="cd02145">
    <property type="entry name" value="BluB"/>
    <property type="match status" value="1"/>
</dbReference>
<dbReference type="FunFam" id="3.40.109.10:FF:000013">
    <property type="entry name" value="5,6-dimethylbenzimidazole synthase"/>
    <property type="match status" value="1"/>
</dbReference>
<dbReference type="Gene3D" id="3.40.109.10">
    <property type="entry name" value="NADH Oxidase"/>
    <property type="match status" value="1"/>
</dbReference>
<dbReference type="InterPro" id="IPR012825">
    <property type="entry name" value="BluB"/>
</dbReference>
<dbReference type="InterPro" id="IPR029479">
    <property type="entry name" value="Nitroreductase"/>
</dbReference>
<dbReference type="InterPro" id="IPR000415">
    <property type="entry name" value="Nitroreductase-like"/>
</dbReference>
<dbReference type="InterPro" id="IPR050627">
    <property type="entry name" value="Nitroreductase/BluB"/>
</dbReference>
<dbReference type="NCBIfam" id="TIGR02476">
    <property type="entry name" value="BluB"/>
    <property type="match status" value="1"/>
</dbReference>
<dbReference type="PANTHER" id="PTHR23026:SF123">
    <property type="entry name" value="NAD(P)H NITROREDUCTASE RV3131-RELATED"/>
    <property type="match status" value="1"/>
</dbReference>
<dbReference type="PANTHER" id="PTHR23026">
    <property type="entry name" value="NADPH NITROREDUCTASE"/>
    <property type="match status" value="1"/>
</dbReference>
<dbReference type="Pfam" id="PF00881">
    <property type="entry name" value="Nitroreductase"/>
    <property type="match status" value="1"/>
</dbReference>
<dbReference type="SUPFAM" id="SSF55469">
    <property type="entry name" value="FMN-dependent nitroreductase-like"/>
    <property type="match status" value="1"/>
</dbReference>
<accession>Q2RNG5</accession>
<comment type="function">
    <text evidence="2">Involved in the biosynthesis of cobalamin (vitamin B12). Catalyzes the oxidative fragmentation and contraction of the isoalloxazine heterocycle and the cleavage of the ribityl tail of FMNH(2) to form 5,6-dimethylbenzimidazole (DMB) and D-erythrose 4-phosphate (E4P). NAD(P)H is only required initially to reduce FMN and oxygen drives the oxidative fragmentation.</text>
</comment>
<comment type="catalytic activity">
    <reaction evidence="2">
        <text>FMNH2 + O2 = dialurate + 5,6-dimethylbenzimidazole + D-erythrose 4-phosphate + H(+)</text>
        <dbReference type="Rhea" id="RHEA:27345"/>
        <dbReference type="ChEBI" id="CHEBI:15378"/>
        <dbReference type="ChEBI" id="CHEBI:15379"/>
        <dbReference type="ChEBI" id="CHEBI:15890"/>
        <dbReference type="ChEBI" id="CHEBI:16897"/>
        <dbReference type="ChEBI" id="CHEBI:57618"/>
        <dbReference type="ChEBI" id="CHEBI:140629"/>
        <dbReference type="EC" id="1.13.11.79"/>
    </reaction>
</comment>
<comment type="subunit">
    <text evidence="1">Homooctamer.</text>
</comment>
<comment type="disruption phenotype">
    <text evidence="2">Cells lacking this gene fail to synthesize cobalamin.</text>
</comment>
<comment type="similarity">
    <text evidence="3">Belongs to the BluB family.</text>
</comment>
<keyword id="KW-0169">Cobalamin biosynthesis</keyword>
<keyword id="KW-0285">Flavoprotein</keyword>
<keyword id="KW-0288">FMN</keyword>
<keyword id="KW-0520">NAD</keyword>
<keyword id="KW-0521">NADP</keyword>
<keyword id="KW-0547">Nucleotide-binding</keyword>
<keyword id="KW-0560">Oxidoreductase</keyword>
<keyword id="KW-1185">Reference proteome</keyword>
<protein>
    <recommendedName>
        <fullName>5,6-dimethylbenzimidazole synthase</fullName>
        <shortName>DMB synthase</shortName>
        <ecNumber>1.13.11.79</ecNumber>
    </recommendedName>
</protein>
<reference key="1">
    <citation type="journal article" date="2011" name="Stand. Genomic Sci.">
        <title>Complete genome sequence of Rhodospirillum rubrum type strain (S1).</title>
        <authorList>
            <person name="Munk A.C."/>
            <person name="Copeland A."/>
            <person name="Lucas S."/>
            <person name="Lapidus A."/>
            <person name="Del Rio T.G."/>
            <person name="Barry K."/>
            <person name="Detter J.C."/>
            <person name="Hammon N."/>
            <person name="Israni S."/>
            <person name="Pitluck S."/>
            <person name="Brettin T."/>
            <person name="Bruce D."/>
            <person name="Han C."/>
            <person name="Tapia R."/>
            <person name="Gilna P."/>
            <person name="Schmutz J."/>
            <person name="Larimer F."/>
            <person name="Land M."/>
            <person name="Kyrpides N.C."/>
            <person name="Mavromatis K."/>
            <person name="Richardson P."/>
            <person name="Rohde M."/>
            <person name="Goeker M."/>
            <person name="Klenk H.P."/>
            <person name="Zhang Y."/>
            <person name="Roberts G.P."/>
            <person name="Reslewic S."/>
            <person name="Schwartz D.C."/>
        </authorList>
    </citation>
    <scope>NUCLEOTIDE SEQUENCE [LARGE SCALE GENOMIC DNA]</scope>
    <source>
        <strain>ATCC 11170 / ATH 1.1.1 / DSM 467 / LMG 4362 / NCIMB 8255 / S1</strain>
    </source>
</reference>
<reference key="2">
    <citation type="journal article" date="2007" name="Proc. Natl. Acad. Sci. U.S.A.">
        <title>Single-enzyme conversion of FMNH2 to 5,6-dimethylbenzimidazole, the lower ligand of B12.</title>
        <authorList>
            <person name="Gray M.J."/>
            <person name="Escalante-Semerena J.C."/>
        </authorList>
    </citation>
    <scope>FUNCTION</scope>
    <scope>CATALYTIC ACTIVITY</scope>
    <scope>MUTAGENESIS OF ARG-22</scope>
    <scope>DISRUPTION PHENOTYPE</scope>
</reference>
<organism>
    <name type="scientific">Rhodospirillum rubrum (strain ATCC 11170 / ATH 1.1.1 / DSM 467 / LMG 4362 / NCIMB 8255 / S1)</name>
    <dbReference type="NCBI Taxonomy" id="269796"/>
    <lineage>
        <taxon>Bacteria</taxon>
        <taxon>Pseudomonadati</taxon>
        <taxon>Pseudomonadota</taxon>
        <taxon>Alphaproteobacteria</taxon>
        <taxon>Rhodospirillales</taxon>
        <taxon>Rhodospirillaceae</taxon>
        <taxon>Rhodospirillum</taxon>
    </lineage>
</organism>